<sequence length="147" mass="16211">MVHLTSEEKNCITTIWSKVQVDQTGGEALGRMLVVYPWTTRFFGSFGDLSSPGAVMSNSKVQAHGAKVLTSFGEAVKHLDNLKGTYAKLSELHCDKLHVDPENFKMLGNIIVICLAEHFGKDFTPECQVAWQKLVAGVAHALAHKYH</sequence>
<reference key="1">
    <citation type="journal article" date="1988" name="Proc. Natl. Acad. Sci. U.S.A.">
        <title>Evolutionary and developmental aspects of two hemoglobin beta-chain genes (epsilon M and beta M) of opossum.</title>
        <authorList>
            <person name="Koop B."/>
            <person name="Goodman M."/>
        </authorList>
    </citation>
    <scope>NUCLEOTIDE SEQUENCE [GENOMIC DNA]</scope>
</reference>
<reference key="2">
    <citation type="journal article" date="1979" name="J. Biol. Chem.">
        <title>Opossum hemoglobin. The amino acid sequences of the alpha and beta chains.</title>
        <authorList>
            <person name="Stenzel P."/>
            <person name="Brimhall B."/>
            <person name="Jones R.T."/>
            <person name="Black J.A."/>
            <person name="McLachlan A."/>
            <person name="Gibson D."/>
        </authorList>
    </citation>
    <scope>PROTEIN SEQUENCE OF 2-147</scope>
</reference>
<accession>P02109</accession>
<organism>
    <name type="scientific">Didelphis virginiana</name>
    <name type="common">North American opossum</name>
    <name type="synonym">Didelphis marsupialis virginiana</name>
    <dbReference type="NCBI Taxonomy" id="9267"/>
    <lineage>
        <taxon>Eukaryota</taxon>
        <taxon>Metazoa</taxon>
        <taxon>Chordata</taxon>
        <taxon>Craniata</taxon>
        <taxon>Vertebrata</taxon>
        <taxon>Euteleostomi</taxon>
        <taxon>Mammalia</taxon>
        <taxon>Metatheria</taxon>
        <taxon>Didelphimorphia</taxon>
        <taxon>Didelphidae</taxon>
        <taxon>Didelphis</taxon>
    </lineage>
</organism>
<name>HBB_DIDVI</name>
<gene>
    <name type="primary">HBB</name>
</gene>
<dbReference type="EMBL" id="J03643">
    <property type="protein sequence ID" value="AAA30976.1"/>
    <property type="molecule type" value="Genomic_DNA"/>
</dbReference>
<dbReference type="PIR" id="B30213">
    <property type="entry name" value="HBOP"/>
</dbReference>
<dbReference type="SMR" id="P02109"/>
<dbReference type="GO" id="GO:0072562">
    <property type="term" value="C:blood microparticle"/>
    <property type="evidence" value="ECO:0007669"/>
    <property type="project" value="TreeGrafter"/>
</dbReference>
<dbReference type="GO" id="GO:0031838">
    <property type="term" value="C:haptoglobin-hemoglobin complex"/>
    <property type="evidence" value="ECO:0007669"/>
    <property type="project" value="TreeGrafter"/>
</dbReference>
<dbReference type="GO" id="GO:0005833">
    <property type="term" value="C:hemoglobin complex"/>
    <property type="evidence" value="ECO:0007669"/>
    <property type="project" value="InterPro"/>
</dbReference>
<dbReference type="GO" id="GO:0031720">
    <property type="term" value="F:haptoglobin binding"/>
    <property type="evidence" value="ECO:0007669"/>
    <property type="project" value="TreeGrafter"/>
</dbReference>
<dbReference type="GO" id="GO:0020037">
    <property type="term" value="F:heme binding"/>
    <property type="evidence" value="ECO:0007669"/>
    <property type="project" value="InterPro"/>
</dbReference>
<dbReference type="GO" id="GO:0046872">
    <property type="term" value="F:metal ion binding"/>
    <property type="evidence" value="ECO:0007669"/>
    <property type="project" value="UniProtKB-KW"/>
</dbReference>
<dbReference type="GO" id="GO:0043177">
    <property type="term" value="F:organic acid binding"/>
    <property type="evidence" value="ECO:0007669"/>
    <property type="project" value="TreeGrafter"/>
</dbReference>
<dbReference type="GO" id="GO:0019825">
    <property type="term" value="F:oxygen binding"/>
    <property type="evidence" value="ECO:0007669"/>
    <property type="project" value="InterPro"/>
</dbReference>
<dbReference type="GO" id="GO:0005344">
    <property type="term" value="F:oxygen carrier activity"/>
    <property type="evidence" value="ECO:0007669"/>
    <property type="project" value="UniProtKB-KW"/>
</dbReference>
<dbReference type="GO" id="GO:0004601">
    <property type="term" value="F:peroxidase activity"/>
    <property type="evidence" value="ECO:0007669"/>
    <property type="project" value="TreeGrafter"/>
</dbReference>
<dbReference type="GO" id="GO:0042744">
    <property type="term" value="P:hydrogen peroxide catabolic process"/>
    <property type="evidence" value="ECO:0007669"/>
    <property type="project" value="TreeGrafter"/>
</dbReference>
<dbReference type="CDD" id="cd08925">
    <property type="entry name" value="Hb-beta-like"/>
    <property type="match status" value="1"/>
</dbReference>
<dbReference type="FunFam" id="1.10.490.10:FF:000001">
    <property type="entry name" value="Hemoglobin subunit beta"/>
    <property type="match status" value="1"/>
</dbReference>
<dbReference type="Gene3D" id="1.10.490.10">
    <property type="entry name" value="Globins"/>
    <property type="match status" value="1"/>
</dbReference>
<dbReference type="InterPro" id="IPR000971">
    <property type="entry name" value="Globin"/>
</dbReference>
<dbReference type="InterPro" id="IPR009050">
    <property type="entry name" value="Globin-like_sf"/>
</dbReference>
<dbReference type="InterPro" id="IPR012292">
    <property type="entry name" value="Globin/Proto"/>
</dbReference>
<dbReference type="InterPro" id="IPR002337">
    <property type="entry name" value="Hemoglobin_b"/>
</dbReference>
<dbReference type="InterPro" id="IPR050056">
    <property type="entry name" value="Hemoglobin_oxygen_transport"/>
</dbReference>
<dbReference type="PANTHER" id="PTHR11442">
    <property type="entry name" value="HEMOGLOBIN FAMILY MEMBER"/>
    <property type="match status" value="1"/>
</dbReference>
<dbReference type="PANTHER" id="PTHR11442:SF7">
    <property type="entry name" value="HEMOGLOBIN SUBUNIT EPSILON"/>
    <property type="match status" value="1"/>
</dbReference>
<dbReference type="Pfam" id="PF00042">
    <property type="entry name" value="Globin"/>
    <property type="match status" value="1"/>
</dbReference>
<dbReference type="PRINTS" id="PR00814">
    <property type="entry name" value="BETAHAEM"/>
</dbReference>
<dbReference type="SUPFAM" id="SSF46458">
    <property type="entry name" value="Globin-like"/>
    <property type="match status" value="1"/>
</dbReference>
<dbReference type="PROSITE" id="PS01033">
    <property type="entry name" value="GLOBIN"/>
    <property type="match status" value="1"/>
</dbReference>
<evidence type="ECO:0000250" key="1">
    <source>
        <dbReference type="UniProtKB" id="P02086"/>
    </source>
</evidence>
<evidence type="ECO:0000250" key="2">
    <source>
        <dbReference type="UniProtKB" id="P68871"/>
    </source>
</evidence>
<evidence type="ECO:0000255" key="3">
    <source>
        <dbReference type="PROSITE-ProRule" id="PRU00238"/>
    </source>
</evidence>
<evidence type="ECO:0000269" key="4">
    <source>
    </source>
</evidence>
<evidence type="ECO:0000305" key="5"/>
<proteinExistence type="evidence at protein level"/>
<protein>
    <recommendedName>
        <fullName>Hemoglobin subunit beta-M</fullName>
    </recommendedName>
    <alternativeName>
        <fullName>Beta-M-globin</fullName>
    </alternativeName>
    <alternativeName>
        <fullName>Hemoglobin beta-M chain</fullName>
    </alternativeName>
</protein>
<keyword id="KW-0007">Acetylation</keyword>
<keyword id="KW-0903">Direct protein sequencing</keyword>
<keyword id="KW-0349">Heme</keyword>
<keyword id="KW-0408">Iron</keyword>
<keyword id="KW-0479">Metal-binding</keyword>
<keyword id="KW-0561">Oxygen transport</keyword>
<keyword id="KW-0597">Phosphoprotein</keyword>
<keyword id="KW-0702">S-nitrosylation</keyword>
<keyword id="KW-0813">Transport</keyword>
<comment type="function">
    <text>Involved in oxygen transport from the lung to the various peripheral tissues.</text>
</comment>
<comment type="subunit">
    <text>Heterotetramer of two alpha chains and two beta chains.</text>
</comment>
<comment type="tissue specificity">
    <text>Red blood cells.</text>
</comment>
<comment type="similarity">
    <text evidence="3">Belongs to the globin family.</text>
</comment>
<feature type="initiator methionine" description="Removed" evidence="1 4">
    <location>
        <position position="1"/>
    </location>
</feature>
<feature type="chain" id="PRO_0000052948" description="Hemoglobin subunit beta-M">
    <location>
        <begin position="2"/>
        <end position="147"/>
    </location>
</feature>
<feature type="domain" description="Globin" evidence="3">
    <location>
        <begin position="3"/>
        <end position="147"/>
    </location>
</feature>
<feature type="binding site" description="distal binding residue">
    <location>
        <position position="64"/>
    </location>
    <ligand>
        <name>heme b</name>
        <dbReference type="ChEBI" id="CHEBI:60344"/>
    </ligand>
    <ligandPart>
        <name>Fe</name>
        <dbReference type="ChEBI" id="CHEBI:18248"/>
    </ligandPart>
</feature>
<feature type="binding site" description="proximal binding residue">
    <location>
        <position position="93"/>
    </location>
    <ligand>
        <name>heme b</name>
        <dbReference type="ChEBI" id="CHEBI:60344"/>
    </ligand>
    <ligandPart>
        <name>Fe</name>
        <dbReference type="ChEBI" id="CHEBI:18248"/>
    </ligandPart>
</feature>
<feature type="modified residue" description="N-acetylvaline" evidence="1">
    <location>
        <position position="2"/>
    </location>
</feature>
<feature type="modified residue" description="Phosphothreonine" evidence="2">
    <location>
        <position position="13"/>
    </location>
</feature>
<feature type="modified residue" description="Phosphoserine" evidence="2">
    <location>
        <position position="45"/>
    </location>
</feature>
<feature type="modified residue" description="N6-acetyllysine" evidence="2">
    <location>
        <position position="60"/>
    </location>
</feature>
<feature type="modified residue" description="N6-acetyllysine" evidence="2">
    <location>
        <position position="83"/>
    </location>
</feature>
<feature type="modified residue" description="S-nitrosocysteine" evidence="2">
    <location>
        <position position="94"/>
    </location>
</feature>
<feature type="modified residue" description="N6-acetyllysine" evidence="2">
    <location>
        <position position="145"/>
    </location>
</feature>
<feature type="sequence conflict" description="In Ref. 2; AA sequence." evidence="5" ref="2">
    <original>N</original>
    <variation>D</variation>
    <location>
        <position position="81"/>
    </location>
</feature>